<name>MURB_BURM7</name>
<reference key="1">
    <citation type="journal article" date="2010" name="Genome Biol. Evol.">
        <title>Continuing evolution of Burkholderia mallei through genome reduction and large-scale rearrangements.</title>
        <authorList>
            <person name="Losada L."/>
            <person name="Ronning C.M."/>
            <person name="DeShazer D."/>
            <person name="Woods D."/>
            <person name="Fedorova N."/>
            <person name="Kim H.S."/>
            <person name="Shabalina S.A."/>
            <person name="Pearson T.R."/>
            <person name="Brinkac L."/>
            <person name="Tan P."/>
            <person name="Nandi T."/>
            <person name="Crabtree J."/>
            <person name="Badger J."/>
            <person name="Beckstrom-Sternberg S."/>
            <person name="Saqib M."/>
            <person name="Schutzer S.E."/>
            <person name="Keim P."/>
            <person name="Nierman W.C."/>
        </authorList>
    </citation>
    <scope>NUCLEOTIDE SEQUENCE [LARGE SCALE GENOMIC DNA]</scope>
    <source>
        <strain>NCTC 10247</strain>
    </source>
</reference>
<accession>A3MHG6</accession>
<evidence type="ECO:0000255" key="1">
    <source>
        <dbReference type="HAMAP-Rule" id="MF_00037"/>
    </source>
</evidence>
<organism>
    <name type="scientific">Burkholderia mallei (strain NCTC 10247)</name>
    <dbReference type="NCBI Taxonomy" id="320389"/>
    <lineage>
        <taxon>Bacteria</taxon>
        <taxon>Pseudomonadati</taxon>
        <taxon>Pseudomonadota</taxon>
        <taxon>Betaproteobacteria</taxon>
        <taxon>Burkholderiales</taxon>
        <taxon>Burkholderiaceae</taxon>
        <taxon>Burkholderia</taxon>
        <taxon>pseudomallei group</taxon>
    </lineage>
</organism>
<gene>
    <name evidence="1" type="primary">murB</name>
    <name type="ordered locus">BMA10247_0123</name>
</gene>
<proteinExistence type="inferred from homology"/>
<dbReference type="EC" id="1.3.1.98" evidence="1"/>
<dbReference type="EMBL" id="CP000548">
    <property type="protein sequence ID" value="ABO06085.1"/>
    <property type="molecule type" value="Genomic_DNA"/>
</dbReference>
<dbReference type="SMR" id="A3MHG6"/>
<dbReference type="KEGG" id="bmn:BMA10247_0123"/>
<dbReference type="UniPathway" id="UPA00219"/>
<dbReference type="GO" id="GO:0005829">
    <property type="term" value="C:cytosol"/>
    <property type="evidence" value="ECO:0007669"/>
    <property type="project" value="TreeGrafter"/>
</dbReference>
<dbReference type="GO" id="GO:0071949">
    <property type="term" value="F:FAD binding"/>
    <property type="evidence" value="ECO:0007669"/>
    <property type="project" value="InterPro"/>
</dbReference>
<dbReference type="GO" id="GO:0008762">
    <property type="term" value="F:UDP-N-acetylmuramate dehydrogenase activity"/>
    <property type="evidence" value="ECO:0007669"/>
    <property type="project" value="UniProtKB-UniRule"/>
</dbReference>
<dbReference type="GO" id="GO:0051301">
    <property type="term" value="P:cell division"/>
    <property type="evidence" value="ECO:0007669"/>
    <property type="project" value="UniProtKB-KW"/>
</dbReference>
<dbReference type="GO" id="GO:0071555">
    <property type="term" value="P:cell wall organization"/>
    <property type="evidence" value="ECO:0007669"/>
    <property type="project" value="UniProtKB-KW"/>
</dbReference>
<dbReference type="GO" id="GO:0009252">
    <property type="term" value="P:peptidoglycan biosynthetic process"/>
    <property type="evidence" value="ECO:0007669"/>
    <property type="project" value="UniProtKB-UniRule"/>
</dbReference>
<dbReference type="GO" id="GO:0008360">
    <property type="term" value="P:regulation of cell shape"/>
    <property type="evidence" value="ECO:0007669"/>
    <property type="project" value="UniProtKB-KW"/>
</dbReference>
<dbReference type="Gene3D" id="3.30.465.10">
    <property type="match status" value="1"/>
</dbReference>
<dbReference type="Gene3D" id="3.90.78.10">
    <property type="entry name" value="UDP-N-acetylenolpyruvoylglucosamine reductase, C-terminal domain"/>
    <property type="match status" value="1"/>
</dbReference>
<dbReference type="Gene3D" id="3.30.43.10">
    <property type="entry name" value="Uridine Diphospho-n-acetylenolpyruvylglucosamine Reductase, domain 2"/>
    <property type="match status" value="1"/>
</dbReference>
<dbReference type="HAMAP" id="MF_00037">
    <property type="entry name" value="MurB"/>
    <property type="match status" value="1"/>
</dbReference>
<dbReference type="InterPro" id="IPR016166">
    <property type="entry name" value="FAD-bd_PCMH"/>
</dbReference>
<dbReference type="InterPro" id="IPR036318">
    <property type="entry name" value="FAD-bd_PCMH-like_sf"/>
</dbReference>
<dbReference type="InterPro" id="IPR016167">
    <property type="entry name" value="FAD-bd_PCMH_sub1"/>
</dbReference>
<dbReference type="InterPro" id="IPR016169">
    <property type="entry name" value="FAD-bd_PCMH_sub2"/>
</dbReference>
<dbReference type="InterPro" id="IPR003170">
    <property type="entry name" value="MurB"/>
</dbReference>
<dbReference type="InterPro" id="IPR011601">
    <property type="entry name" value="MurB_C"/>
</dbReference>
<dbReference type="InterPro" id="IPR036635">
    <property type="entry name" value="MurB_C_sf"/>
</dbReference>
<dbReference type="InterPro" id="IPR006094">
    <property type="entry name" value="Oxid_FAD_bind_N"/>
</dbReference>
<dbReference type="NCBIfam" id="TIGR00179">
    <property type="entry name" value="murB"/>
    <property type="match status" value="1"/>
</dbReference>
<dbReference type="NCBIfam" id="NF000755">
    <property type="entry name" value="PRK00046.1"/>
    <property type="match status" value="1"/>
</dbReference>
<dbReference type="PANTHER" id="PTHR21071">
    <property type="entry name" value="UDP-N-ACETYLENOLPYRUVOYLGLUCOSAMINE REDUCTASE"/>
    <property type="match status" value="1"/>
</dbReference>
<dbReference type="PANTHER" id="PTHR21071:SF4">
    <property type="entry name" value="UDP-N-ACETYLENOLPYRUVOYLGLUCOSAMINE REDUCTASE"/>
    <property type="match status" value="1"/>
</dbReference>
<dbReference type="Pfam" id="PF01565">
    <property type="entry name" value="FAD_binding_4"/>
    <property type="match status" value="1"/>
</dbReference>
<dbReference type="Pfam" id="PF02873">
    <property type="entry name" value="MurB_C"/>
    <property type="match status" value="1"/>
</dbReference>
<dbReference type="SUPFAM" id="SSF56176">
    <property type="entry name" value="FAD-binding/transporter-associated domain-like"/>
    <property type="match status" value="1"/>
</dbReference>
<dbReference type="SUPFAM" id="SSF56194">
    <property type="entry name" value="Uridine diphospho-N-Acetylenolpyruvylglucosamine reductase, MurB, C-terminal domain"/>
    <property type="match status" value="1"/>
</dbReference>
<dbReference type="PROSITE" id="PS51387">
    <property type="entry name" value="FAD_PCMH"/>
    <property type="match status" value="1"/>
</dbReference>
<feature type="chain" id="PRO_1000002871" description="UDP-N-acetylenolpyruvoylglucosamine reductase">
    <location>
        <begin position="1"/>
        <end position="347"/>
    </location>
</feature>
<feature type="domain" description="FAD-binding PCMH-type" evidence="1">
    <location>
        <begin position="24"/>
        <end position="195"/>
    </location>
</feature>
<feature type="active site" evidence="1">
    <location>
        <position position="171"/>
    </location>
</feature>
<feature type="active site" description="Proton donor" evidence="1">
    <location>
        <position position="247"/>
    </location>
</feature>
<feature type="active site" evidence="1">
    <location>
        <position position="343"/>
    </location>
</feature>
<keyword id="KW-0131">Cell cycle</keyword>
<keyword id="KW-0132">Cell division</keyword>
<keyword id="KW-0133">Cell shape</keyword>
<keyword id="KW-0961">Cell wall biogenesis/degradation</keyword>
<keyword id="KW-0963">Cytoplasm</keyword>
<keyword id="KW-0274">FAD</keyword>
<keyword id="KW-0285">Flavoprotein</keyword>
<keyword id="KW-0521">NADP</keyword>
<keyword id="KW-0560">Oxidoreductase</keyword>
<keyword id="KW-0573">Peptidoglycan synthesis</keyword>
<comment type="function">
    <text evidence="1">Cell wall formation.</text>
</comment>
<comment type="catalytic activity">
    <reaction evidence="1">
        <text>UDP-N-acetyl-alpha-D-muramate + NADP(+) = UDP-N-acetyl-3-O-(1-carboxyvinyl)-alpha-D-glucosamine + NADPH + H(+)</text>
        <dbReference type="Rhea" id="RHEA:12248"/>
        <dbReference type="ChEBI" id="CHEBI:15378"/>
        <dbReference type="ChEBI" id="CHEBI:57783"/>
        <dbReference type="ChEBI" id="CHEBI:58349"/>
        <dbReference type="ChEBI" id="CHEBI:68483"/>
        <dbReference type="ChEBI" id="CHEBI:70757"/>
        <dbReference type="EC" id="1.3.1.98"/>
    </reaction>
</comment>
<comment type="cofactor">
    <cofactor evidence="1">
        <name>FAD</name>
        <dbReference type="ChEBI" id="CHEBI:57692"/>
    </cofactor>
</comment>
<comment type="pathway">
    <text evidence="1">Cell wall biogenesis; peptidoglycan biosynthesis.</text>
</comment>
<comment type="subcellular location">
    <subcellularLocation>
        <location evidence="1">Cytoplasm</location>
    </subcellularLocation>
</comment>
<comment type="similarity">
    <text evidence="1">Belongs to the MurB family.</text>
</comment>
<sequence length="347" mass="37318">MSRPDSAVSLLPDYSLRAHNTFGFDARARVAARIGSPGQFASLARDPRVAGLDRLVLGGGSNVVFTRDFDGLVLLDEIRGRALVREDDGAWYVEAGGGENWHAFVEWTLAEGMPGLENLALIPGTVGAAPIQNIGAYGLEMKEHFASLRAVDLATGELVEFDAARCAFGYRDSFFKRDGRGRFAIVAVTFRLPKAWTPRIGYADVARELAARGIDARAARARDVFDAVVAIRRAKLPDPLALGNAGSFFKNPVIDAQAFAALRAREPDIVSYPQPDGRVKLAAGWLIDRCGWKGRALGAAAVHERQALVLVNLGGASGADVLALAHAIRRDVLGRFGVELEMEPVCL</sequence>
<protein>
    <recommendedName>
        <fullName evidence="1">UDP-N-acetylenolpyruvoylglucosamine reductase</fullName>
        <ecNumber evidence="1">1.3.1.98</ecNumber>
    </recommendedName>
    <alternativeName>
        <fullName evidence="1">UDP-N-acetylmuramate dehydrogenase</fullName>
    </alternativeName>
</protein>